<proteinExistence type="inferred from homology"/>
<dbReference type="EC" id="2.3.3.9" evidence="1"/>
<dbReference type="EMBL" id="AE007869">
    <property type="protein sequence ID" value="AAK85871.1"/>
    <property type="status" value="ALT_INIT"/>
    <property type="molecule type" value="Genomic_DNA"/>
</dbReference>
<dbReference type="PIR" id="AH2582">
    <property type="entry name" value="AH2582"/>
</dbReference>
<dbReference type="PIR" id="F97364">
    <property type="entry name" value="F97364"/>
</dbReference>
<dbReference type="RefSeq" id="NP_353086.1">
    <property type="nucleotide sequence ID" value="NC_003062.2"/>
</dbReference>
<dbReference type="SMR" id="Q8UJ85"/>
<dbReference type="STRING" id="176299.Atu0047"/>
<dbReference type="EnsemblBacteria" id="AAK85871">
    <property type="protein sequence ID" value="AAK85871"/>
    <property type="gene ID" value="Atu0047"/>
</dbReference>
<dbReference type="KEGG" id="atu:Atu0047"/>
<dbReference type="PATRIC" id="fig|176299.10.peg.47"/>
<dbReference type="eggNOG" id="COG2225">
    <property type="taxonomic scope" value="Bacteria"/>
</dbReference>
<dbReference type="HOGENOM" id="CLU_028446_1_0_5"/>
<dbReference type="OrthoDB" id="9762054at2"/>
<dbReference type="UniPathway" id="UPA00703">
    <property type="reaction ID" value="UER00720"/>
</dbReference>
<dbReference type="Proteomes" id="UP000000813">
    <property type="component" value="Chromosome circular"/>
</dbReference>
<dbReference type="GO" id="GO:0005829">
    <property type="term" value="C:cytosol"/>
    <property type="evidence" value="ECO:0007669"/>
    <property type="project" value="TreeGrafter"/>
</dbReference>
<dbReference type="GO" id="GO:0000287">
    <property type="term" value="F:magnesium ion binding"/>
    <property type="evidence" value="ECO:0007669"/>
    <property type="project" value="TreeGrafter"/>
</dbReference>
<dbReference type="GO" id="GO:0004474">
    <property type="term" value="F:malate synthase activity"/>
    <property type="evidence" value="ECO:0007669"/>
    <property type="project" value="UniProtKB-UniRule"/>
</dbReference>
<dbReference type="GO" id="GO:0009436">
    <property type="term" value="P:glyoxylate catabolic process"/>
    <property type="evidence" value="ECO:0007669"/>
    <property type="project" value="TreeGrafter"/>
</dbReference>
<dbReference type="GO" id="GO:0006097">
    <property type="term" value="P:glyoxylate cycle"/>
    <property type="evidence" value="ECO:0007669"/>
    <property type="project" value="UniProtKB-UniRule"/>
</dbReference>
<dbReference type="GO" id="GO:0006099">
    <property type="term" value="P:tricarboxylic acid cycle"/>
    <property type="evidence" value="ECO:0007669"/>
    <property type="project" value="UniProtKB-KW"/>
</dbReference>
<dbReference type="CDD" id="cd00728">
    <property type="entry name" value="malate_synt_G"/>
    <property type="match status" value="1"/>
</dbReference>
<dbReference type="FunFam" id="3.20.20.360:FF:000002">
    <property type="entry name" value="Malate synthase G"/>
    <property type="match status" value="1"/>
</dbReference>
<dbReference type="Gene3D" id="3.20.20.360">
    <property type="entry name" value="Malate synthase, domain 3"/>
    <property type="match status" value="2"/>
</dbReference>
<dbReference type="Gene3D" id="1.20.1220.12">
    <property type="entry name" value="Malate synthase, domain III"/>
    <property type="match status" value="1"/>
</dbReference>
<dbReference type="HAMAP" id="MF_00641">
    <property type="entry name" value="Malate_synth_G"/>
    <property type="match status" value="1"/>
</dbReference>
<dbReference type="InterPro" id="IPR044856">
    <property type="entry name" value="Malate_synth_C_sf"/>
</dbReference>
<dbReference type="InterPro" id="IPR011076">
    <property type="entry name" value="Malate_synth_sf"/>
</dbReference>
<dbReference type="InterPro" id="IPR001465">
    <property type="entry name" value="Malate_synthase_TIM"/>
</dbReference>
<dbReference type="InterPro" id="IPR006253">
    <property type="entry name" value="Malate_synthG"/>
</dbReference>
<dbReference type="InterPro" id="IPR048355">
    <property type="entry name" value="MS_C"/>
</dbReference>
<dbReference type="InterPro" id="IPR048356">
    <property type="entry name" value="MS_N"/>
</dbReference>
<dbReference type="InterPro" id="IPR046363">
    <property type="entry name" value="MS_N_TIM-barrel_dom"/>
</dbReference>
<dbReference type="InterPro" id="IPR048357">
    <property type="entry name" value="MSG_insertion"/>
</dbReference>
<dbReference type="NCBIfam" id="TIGR01345">
    <property type="entry name" value="malate_syn_G"/>
    <property type="match status" value="1"/>
</dbReference>
<dbReference type="NCBIfam" id="NF002825">
    <property type="entry name" value="PRK02999.1"/>
    <property type="match status" value="1"/>
</dbReference>
<dbReference type="PANTHER" id="PTHR42739">
    <property type="entry name" value="MALATE SYNTHASE G"/>
    <property type="match status" value="1"/>
</dbReference>
<dbReference type="PANTHER" id="PTHR42739:SF1">
    <property type="entry name" value="MALATE SYNTHASE G"/>
    <property type="match status" value="1"/>
</dbReference>
<dbReference type="Pfam" id="PF20659">
    <property type="entry name" value="MS_C"/>
    <property type="match status" value="1"/>
</dbReference>
<dbReference type="Pfam" id="PF20656">
    <property type="entry name" value="MS_N"/>
    <property type="match status" value="1"/>
</dbReference>
<dbReference type="Pfam" id="PF01274">
    <property type="entry name" value="MS_TIM-barrel"/>
    <property type="match status" value="1"/>
</dbReference>
<dbReference type="Pfam" id="PF20658">
    <property type="entry name" value="MSG_insertion"/>
    <property type="match status" value="1"/>
</dbReference>
<dbReference type="SUPFAM" id="SSF51645">
    <property type="entry name" value="Malate synthase G"/>
    <property type="match status" value="1"/>
</dbReference>
<name>MASZ_AGRFC</name>
<reference key="1">
    <citation type="journal article" date="2001" name="Science">
        <title>The genome of the natural genetic engineer Agrobacterium tumefaciens C58.</title>
        <authorList>
            <person name="Wood D.W."/>
            <person name="Setubal J.C."/>
            <person name="Kaul R."/>
            <person name="Monks D.E."/>
            <person name="Kitajima J.P."/>
            <person name="Okura V.K."/>
            <person name="Zhou Y."/>
            <person name="Chen L."/>
            <person name="Wood G.E."/>
            <person name="Almeida N.F. Jr."/>
            <person name="Woo L."/>
            <person name="Chen Y."/>
            <person name="Paulsen I.T."/>
            <person name="Eisen J.A."/>
            <person name="Karp P.D."/>
            <person name="Bovee D. Sr."/>
            <person name="Chapman P."/>
            <person name="Clendenning J."/>
            <person name="Deatherage G."/>
            <person name="Gillet W."/>
            <person name="Grant C."/>
            <person name="Kutyavin T."/>
            <person name="Levy R."/>
            <person name="Li M.-J."/>
            <person name="McClelland E."/>
            <person name="Palmieri A."/>
            <person name="Raymond C."/>
            <person name="Rouse G."/>
            <person name="Saenphimmachak C."/>
            <person name="Wu Z."/>
            <person name="Romero P."/>
            <person name="Gordon D."/>
            <person name="Zhang S."/>
            <person name="Yoo H."/>
            <person name="Tao Y."/>
            <person name="Biddle P."/>
            <person name="Jung M."/>
            <person name="Krespan W."/>
            <person name="Perry M."/>
            <person name="Gordon-Kamm B."/>
            <person name="Liao L."/>
            <person name="Kim S."/>
            <person name="Hendrick C."/>
            <person name="Zhao Z.-Y."/>
            <person name="Dolan M."/>
            <person name="Chumley F."/>
            <person name="Tingey S.V."/>
            <person name="Tomb J.-F."/>
            <person name="Gordon M.P."/>
            <person name="Olson M.V."/>
            <person name="Nester E.W."/>
        </authorList>
    </citation>
    <scope>NUCLEOTIDE SEQUENCE [LARGE SCALE GENOMIC DNA]</scope>
    <source>
        <strain>C58 / ATCC 33970</strain>
    </source>
</reference>
<reference key="2">
    <citation type="journal article" date="2001" name="Science">
        <title>Genome sequence of the plant pathogen and biotechnology agent Agrobacterium tumefaciens C58.</title>
        <authorList>
            <person name="Goodner B."/>
            <person name="Hinkle G."/>
            <person name="Gattung S."/>
            <person name="Miller N."/>
            <person name="Blanchard M."/>
            <person name="Qurollo B."/>
            <person name="Goldman B.S."/>
            <person name="Cao Y."/>
            <person name="Askenazi M."/>
            <person name="Halling C."/>
            <person name="Mullin L."/>
            <person name="Houmiel K."/>
            <person name="Gordon J."/>
            <person name="Vaudin M."/>
            <person name="Iartchouk O."/>
            <person name="Epp A."/>
            <person name="Liu F."/>
            <person name="Wollam C."/>
            <person name="Allinger M."/>
            <person name="Doughty D."/>
            <person name="Scott C."/>
            <person name="Lappas C."/>
            <person name="Markelz B."/>
            <person name="Flanagan C."/>
            <person name="Crowell C."/>
            <person name="Gurson J."/>
            <person name="Lomo C."/>
            <person name="Sear C."/>
            <person name="Strub G."/>
            <person name="Cielo C."/>
            <person name="Slater S."/>
        </authorList>
    </citation>
    <scope>NUCLEOTIDE SEQUENCE [LARGE SCALE GENOMIC DNA]</scope>
    <source>
        <strain>C58 / ATCC 33970</strain>
    </source>
</reference>
<keyword id="KW-0963">Cytoplasm</keyword>
<keyword id="KW-0329">Glyoxylate bypass</keyword>
<keyword id="KW-0460">Magnesium</keyword>
<keyword id="KW-0479">Metal-binding</keyword>
<keyword id="KW-0558">Oxidation</keyword>
<keyword id="KW-1185">Reference proteome</keyword>
<keyword id="KW-0808">Transferase</keyword>
<keyword id="KW-0816">Tricarboxylic acid cycle</keyword>
<feature type="chain" id="PRO_0000166879" description="Malate synthase G">
    <location>
        <begin position="1"/>
        <end position="731"/>
    </location>
</feature>
<feature type="active site" description="Proton acceptor" evidence="1">
    <location>
        <position position="346"/>
    </location>
</feature>
<feature type="active site" description="Proton donor" evidence="1">
    <location>
        <position position="637"/>
    </location>
</feature>
<feature type="binding site" evidence="1">
    <location>
        <position position="125"/>
    </location>
    <ligand>
        <name>acetyl-CoA</name>
        <dbReference type="ChEBI" id="CHEBI:57288"/>
    </ligand>
</feature>
<feature type="binding site" evidence="1">
    <location>
        <begin position="132"/>
        <end position="133"/>
    </location>
    <ligand>
        <name>acetyl-CoA</name>
        <dbReference type="ChEBI" id="CHEBI:57288"/>
    </ligand>
</feature>
<feature type="binding site" evidence="1">
    <location>
        <position position="282"/>
    </location>
    <ligand>
        <name>acetyl-CoA</name>
        <dbReference type="ChEBI" id="CHEBI:57288"/>
    </ligand>
</feature>
<feature type="binding site" evidence="1">
    <location>
        <position position="319"/>
    </location>
    <ligand>
        <name>acetyl-CoA</name>
        <dbReference type="ChEBI" id="CHEBI:57288"/>
    </ligand>
</feature>
<feature type="binding site" evidence="1">
    <location>
        <position position="346"/>
    </location>
    <ligand>
        <name>glyoxylate</name>
        <dbReference type="ChEBI" id="CHEBI:36655"/>
    </ligand>
</feature>
<feature type="binding site" evidence="1">
    <location>
        <position position="438"/>
    </location>
    <ligand>
        <name>glyoxylate</name>
        <dbReference type="ChEBI" id="CHEBI:36655"/>
    </ligand>
</feature>
<feature type="binding site" evidence="1">
    <location>
        <position position="438"/>
    </location>
    <ligand>
        <name>Mg(2+)</name>
        <dbReference type="ChEBI" id="CHEBI:18420"/>
    </ligand>
</feature>
<feature type="binding site" evidence="1">
    <location>
        <begin position="463"/>
        <end position="466"/>
    </location>
    <ligand>
        <name>glyoxylate</name>
        <dbReference type="ChEBI" id="CHEBI:36655"/>
    </ligand>
</feature>
<feature type="binding site" evidence="1">
    <location>
        <position position="466"/>
    </location>
    <ligand>
        <name>Mg(2+)</name>
        <dbReference type="ChEBI" id="CHEBI:18420"/>
    </ligand>
</feature>
<feature type="binding site" evidence="1">
    <location>
        <position position="547"/>
    </location>
    <ligand>
        <name>acetyl-CoA</name>
        <dbReference type="ChEBI" id="CHEBI:57288"/>
    </ligand>
</feature>
<feature type="modified residue" description="Cysteine sulfenic acid (-SOH)" evidence="1">
    <location>
        <position position="623"/>
    </location>
</feature>
<comment type="function">
    <text evidence="1">Involved in the glycolate utilization. Catalyzes the condensation and subsequent hydrolysis of acetyl-coenzyme A (acetyl-CoA) and glyoxylate to form malate and CoA.</text>
</comment>
<comment type="catalytic activity">
    <reaction evidence="1">
        <text>glyoxylate + acetyl-CoA + H2O = (S)-malate + CoA + H(+)</text>
        <dbReference type="Rhea" id="RHEA:18181"/>
        <dbReference type="ChEBI" id="CHEBI:15377"/>
        <dbReference type="ChEBI" id="CHEBI:15378"/>
        <dbReference type="ChEBI" id="CHEBI:15589"/>
        <dbReference type="ChEBI" id="CHEBI:36655"/>
        <dbReference type="ChEBI" id="CHEBI:57287"/>
        <dbReference type="ChEBI" id="CHEBI:57288"/>
        <dbReference type="EC" id="2.3.3.9"/>
    </reaction>
</comment>
<comment type="cofactor">
    <cofactor evidence="1">
        <name>Mg(2+)</name>
        <dbReference type="ChEBI" id="CHEBI:18420"/>
    </cofactor>
</comment>
<comment type="pathway">
    <text evidence="1">Carbohydrate metabolism; glyoxylate cycle; (S)-malate from isocitrate: step 2/2.</text>
</comment>
<comment type="subunit">
    <text evidence="1">Monomer.</text>
</comment>
<comment type="subcellular location">
    <subcellularLocation>
        <location evidence="1">Cytoplasm</location>
    </subcellularLocation>
</comment>
<comment type="similarity">
    <text evidence="1">Belongs to the malate synthase family. GlcB subfamily.</text>
</comment>
<comment type="sequence caution" evidence="2">
    <conflict type="erroneous initiation">
        <sequence resource="EMBL-CDS" id="AAK85871"/>
    </conflict>
    <text>Extended N-terminus.</text>
</comment>
<sequence length="731" mass="79520">MPSEYKEAHVSRTDKFGLSIDDRLYAFLTDEVLPGTGLDSETFFEGFSAIVHELSPKNRELLAKRDALQEKIDGWYRENGAPSDFDAYEAFLKEIGYLLPEGPGFKVETNNVDPEIAVVAGPQLVVPVMNARYALNAANARWGSLYDALYGTDAISDADGAEKGRGYNPKRGDKVIAWARNFLDESAPLETGSWSDVTGFNIADGLLQLAIGAATTGLKDAVQFKGFSGEAAKPATILLGKNGLHTEIVIDPSTEIGKSDRAGISDVILESALTTIMDCEDSVAAVDAEDKVLVYGNWLGLMRGDLTEAVSKGGNTFTRRLNPDRYYTAPDGSALTLPGRSLMLVRNVGHLMTNPAILDRDGRDVPEGIMDAVVTALIALYDVGPSGRRQNSRAGSMYVVKPKMHGPEEVAFANEIFARVENLVGMAPNTMKMGIMDEERRTTVNLKESIRAAKDRVVFINTGFLDRTGDEIHTSMEAGPMIRKGDMKQAAWIAAYENWNVDIGLECGLSGHAQIGKGMWAMPDLMAAMLEQKIAHPKAGANTAWVPSPTAATLHATHYHKVDVAAVQEGLKSRGRAKLSDILSVPVAPRPNWTPEEIQRELDNNAQGILGYVVRWVDQGVGCSKVPDINNIGLMEDRATLRISAQHMANWLRHGVVTEAQIIKTMKRMAAVVDTQNAGDPAYLPMASDFDGSVAFQAAVELVLKGREQPNGYTEPVLHRRRLELKAKQAG</sequence>
<organism>
    <name type="scientific">Agrobacterium fabrum (strain C58 / ATCC 33970)</name>
    <name type="common">Agrobacterium tumefaciens (strain C58)</name>
    <dbReference type="NCBI Taxonomy" id="176299"/>
    <lineage>
        <taxon>Bacteria</taxon>
        <taxon>Pseudomonadati</taxon>
        <taxon>Pseudomonadota</taxon>
        <taxon>Alphaproteobacteria</taxon>
        <taxon>Hyphomicrobiales</taxon>
        <taxon>Rhizobiaceae</taxon>
        <taxon>Rhizobium/Agrobacterium group</taxon>
        <taxon>Agrobacterium</taxon>
        <taxon>Agrobacterium tumefaciens complex</taxon>
    </lineage>
</organism>
<protein>
    <recommendedName>
        <fullName evidence="1">Malate synthase G</fullName>
        <ecNumber evidence="1">2.3.3.9</ecNumber>
    </recommendedName>
</protein>
<accession>Q8UJ85</accession>
<gene>
    <name evidence="1" type="primary">glcB</name>
    <name type="ordered locus">Atu0047</name>
    <name type="ORF">AGR_C_78</name>
</gene>
<evidence type="ECO:0000255" key="1">
    <source>
        <dbReference type="HAMAP-Rule" id="MF_00641"/>
    </source>
</evidence>
<evidence type="ECO:0000305" key="2"/>